<organism>
    <name type="scientific">Enterococcus faecalis (strain ATCC 700802 / V583)</name>
    <dbReference type="NCBI Taxonomy" id="226185"/>
    <lineage>
        <taxon>Bacteria</taxon>
        <taxon>Bacillati</taxon>
        <taxon>Bacillota</taxon>
        <taxon>Bacilli</taxon>
        <taxon>Lactobacillales</taxon>
        <taxon>Enterococcaceae</taxon>
        <taxon>Enterococcus</taxon>
    </lineage>
</organism>
<comment type="similarity">
    <text evidence="1">Belongs to the bacterial ribosomal protein bS21 family.</text>
</comment>
<reference key="1">
    <citation type="journal article" date="2003" name="Science">
        <title>Role of mobile DNA in the evolution of vancomycin-resistant Enterococcus faecalis.</title>
        <authorList>
            <person name="Paulsen I.T."/>
            <person name="Banerjei L."/>
            <person name="Myers G.S.A."/>
            <person name="Nelson K.E."/>
            <person name="Seshadri R."/>
            <person name="Read T.D."/>
            <person name="Fouts D.E."/>
            <person name="Eisen J.A."/>
            <person name="Gill S.R."/>
            <person name="Heidelberg J.F."/>
            <person name="Tettelin H."/>
            <person name="Dodson R.J."/>
            <person name="Umayam L.A."/>
            <person name="Brinkac L.M."/>
            <person name="Beanan M.J."/>
            <person name="Daugherty S.C."/>
            <person name="DeBoy R.T."/>
            <person name="Durkin S.A."/>
            <person name="Kolonay J.F."/>
            <person name="Madupu R."/>
            <person name="Nelson W.C."/>
            <person name="Vamathevan J.J."/>
            <person name="Tran B."/>
            <person name="Upton J."/>
            <person name="Hansen T."/>
            <person name="Shetty J."/>
            <person name="Khouri H.M."/>
            <person name="Utterback T.R."/>
            <person name="Radune D."/>
            <person name="Ketchum K.A."/>
            <person name="Dougherty B.A."/>
            <person name="Fraser C.M."/>
        </authorList>
    </citation>
    <scope>NUCLEOTIDE SEQUENCE [LARGE SCALE GENOMIC DNA]</scope>
    <source>
        <strain>ATCC 700802 / V583</strain>
    </source>
</reference>
<evidence type="ECO:0000255" key="1">
    <source>
        <dbReference type="HAMAP-Rule" id="MF_00358"/>
    </source>
</evidence>
<evidence type="ECO:0000256" key="2">
    <source>
        <dbReference type="SAM" id="MobiDB-lite"/>
    </source>
</evidence>
<evidence type="ECO:0000305" key="3"/>
<feature type="chain" id="PRO_0000178335" description="Small ribosomal subunit protein bS21">
    <location>
        <begin position="1"/>
        <end position="58"/>
    </location>
</feature>
<feature type="region of interest" description="Disordered" evidence="2">
    <location>
        <begin position="37"/>
        <end position="58"/>
    </location>
</feature>
<feature type="compositionally biased region" description="Basic residues" evidence="2">
    <location>
        <begin position="43"/>
        <end position="58"/>
    </location>
</feature>
<sequence>MSKTVVRKNESLDDALRRFKRSVSKAGTLQESRKREFYEKPSVKRKKKSEAARKRKKF</sequence>
<keyword id="KW-1185">Reference proteome</keyword>
<keyword id="KW-0687">Ribonucleoprotein</keyword>
<keyword id="KW-0689">Ribosomal protein</keyword>
<protein>
    <recommendedName>
        <fullName evidence="1">Small ribosomal subunit protein bS21</fullName>
    </recommendedName>
    <alternativeName>
        <fullName evidence="3">30S ribosomal protein S21</fullName>
    </alternativeName>
</protein>
<dbReference type="EMBL" id="AE016830">
    <property type="protein sequence ID" value="AAO82135.1"/>
    <property type="molecule type" value="Genomic_DNA"/>
</dbReference>
<dbReference type="RefSeq" id="NP_816065.1">
    <property type="nucleotide sequence ID" value="NC_004668.1"/>
</dbReference>
<dbReference type="RefSeq" id="WP_002356740.1">
    <property type="nucleotide sequence ID" value="NZ_KE136528.1"/>
</dbReference>
<dbReference type="SMR" id="Q831T3"/>
<dbReference type="STRING" id="226185.EF_2416"/>
<dbReference type="EnsemblBacteria" id="AAO82135">
    <property type="protein sequence ID" value="AAO82135"/>
    <property type="gene ID" value="EF_2416"/>
</dbReference>
<dbReference type="GeneID" id="93224556"/>
<dbReference type="KEGG" id="efa:EF2416"/>
<dbReference type="PATRIC" id="fig|226185.45.peg.1128"/>
<dbReference type="eggNOG" id="COG0828">
    <property type="taxonomic scope" value="Bacteria"/>
</dbReference>
<dbReference type="HOGENOM" id="CLU_159258_3_2_9"/>
<dbReference type="PRO" id="PR:Q831T3"/>
<dbReference type="Proteomes" id="UP000001415">
    <property type="component" value="Chromosome"/>
</dbReference>
<dbReference type="GO" id="GO:1990904">
    <property type="term" value="C:ribonucleoprotein complex"/>
    <property type="evidence" value="ECO:0007669"/>
    <property type="project" value="UniProtKB-KW"/>
</dbReference>
<dbReference type="GO" id="GO:0005840">
    <property type="term" value="C:ribosome"/>
    <property type="evidence" value="ECO:0007669"/>
    <property type="project" value="UniProtKB-KW"/>
</dbReference>
<dbReference type="GO" id="GO:0003735">
    <property type="term" value="F:structural constituent of ribosome"/>
    <property type="evidence" value="ECO:0007669"/>
    <property type="project" value="InterPro"/>
</dbReference>
<dbReference type="GO" id="GO:0006412">
    <property type="term" value="P:translation"/>
    <property type="evidence" value="ECO:0007669"/>
    <property type="project" value="UniProtKB-UniRule"/>
</dbReference>
<dbReference type="Gene3D" id="1.20.5.1150">
    <property type="entry name" value="Ribosomal protein S8"/>
    <property type="match status" value="1"/>
</dbReference>
<dbReference type="HAMAP" id="MF_00358">
    <property type="entry name" value="Ribosomal_bS21"/>
    <property type="match status" value="1"/>
</dbReference>
<dbReference type="InterPro" id="IPR001911">
    <property type="entry name" value="Ribosomal_bS21"/>
</dbReference>
<dbReference type="InterPro" id="IPR018278">
    <property type="entry name" value="Ribosomal_bS21_CS"/>
</dbReference>
<dbReference type="InterPro" id="IPR038380">
    <property type="entry name" value="Ribosomal_bS21_sf"/>
</dbReference>
<dbReference type="NCBIfam" id="TIGR00030">
    <property type="entry name" value="S21p"/>
    <property type="match status" value="1"/>
</dbReference>
<dbReference type="PANTHER" id="PTHR21109">
    <property type="entry name" value="MITOCHONDRIAL 28S RIBOSOMAL PROTEIN S21"/>
    <property type="match status" value="1"/>
</dbReference>
<dbReference type="PANTHER" id="PTHR21109:SF22">
    <property type="entry name" value="SMALL RIBOSOMAL SUBUNIT PROTEIN BS21"/>
    <property type="match status" value="1"/>
</dbReference>
<dbReference type="Pfam" id="PF01165">
    <property type="entry name" value="Ribosomal_S21"/>
    <property type="match status" value="1"/>
</dbReference>
<dbReference type="PRINTS" id="PR00976">
    <property type="entry name" value="RIBOSOMALS21"/>
</dbReference>
<dbReference type="PROSITE" id="PS01181">
    <property type="entry name" value="RIBOSOMAL_S21"/>
    <property type="match status" value="1"/>
</dbReference>
<accession>Q831T3</accession>
<gene>
    <name evidence="1" type="primary">rpsU</name>
    <name type="ordered locus">EF_2416</name>
</gene>
<proteinExistence type="inferred from homology"/>
<name>RS21_ENTFA</name>